<gene>
    <name evidence="1" type="primary">purH</name>
    <name type="ordered locus">EFER_3748</name>
</gene>
<sequence>MQQRRPVRRALLSVSDKAGIVEFAQALSARGVELLSTGGTARLLAEKGLPVTEVSDYTGFPEMMDGRVKTLHPKVHGGILGRRGQDDAIMEEHQIQPIDMVVVNLYPFAQTVAREGCSLEDAVENIDIGGPTMVRSAAKNHKDVAIVVKSSDYDAIIKEMDANEGSLTLATRFDLAIKAFEHTAAYDSMIANYFGSMVPAYHGESKEAAGRFPRTLNLNFIKKQDMRYGENSHQQAAFYIEENVKEASVATATQVQGKALSYNNIADTDAALECVKEFAEPACVIVKHANPCGVAIGNSILDAYDRAYKTDPTSAFGGIIAFNRELDAETAQAIISRQFVEVIIAPSASEEALQITAAKQNVRVLTCGQWAERVPGLDFKRVNGGLLVQDRDLGMVGAEELRVVTKRQPTEQELRDALFCWKVAKFVKSNAIVYAKNNMTIGIGAGQMSRVYSAKIAGIKAADEGLEVKGSSMASDAFFPFRDGIDAAAAAGVTCVIQPGGSIRDDEVIAAADEHGIAMLFTDMRHFRH</sequence>
<comment type="catalytic activity">
    <reaction evidence="1">
        <text>(6R)-10-formyltetrahydrofolate + 5-amino-1-(5-phospho-beta-D-ribosyl)imidazole-4-carboxamide = 5-formamido-1-(5-phospho-D-ribosyl)imidazole-4-carboxamide + (6S)-5,6,7,8-tetrahydrofolate</text>
        <dbReference type="Rhea" id="RHEA:22192"/>
        <dbReference type="ChEBI" id="CHEBI:57453"/>
        <dbReference type="ChEBI" id="CHEBI:58467"/>
        <dbReference type="ChEBI" id="CHEBI:58475"/>
        <dbReference type="ChEBI" id="CHEBI:195366"/>
        <dbReference type="EC" id="2.1.2.3"/>
    </reaction>
</comment>
<comment type="catalytic activity">
    <reaction evidence="1">
        <text>IMP + H2O = 5-formamido-1-(5-phospho-D-ribosyl)imidazole-4-carboxamide</text>
        <dbReference type="Rhea" id="RHEA:18445"/>
        <dbReference type="ChEBI" id="CHEBI:15377"/>
        <dbReference type="ChEBI" id="CHEBI:58053"/>
        <dbReference type="ChEBI" id="CHEBI:58467"/>
        <dbReference type="EC" id="3.5.4.10"/>
    </reaction>
</comment>
<comment type="pathway">
    <text evidence="1">Purine metabolism; IMP biosynthesis via de novo pathway; 5-formamido-1-(5-phospho-D-ribosyl)imidazole-4-carboxamide from 5-amino-1-(5-phospho-D-ribosyl)imidazole-4-carboxamide (10-formyl THF route): step 1/1.</text>
</comment>
<comment type="pathway">
    <text evidence="1">Purine metabolism; IMP biosynthesis via de novo pathway; IMP from 5-formamido-1-(5-phospho-D-ribosyl)imidazole-4-carboxamide: step 1/1.</text>
</comment>
<comment type="domain">
    <text evidence="1">The IMP cyclohydrolase activity resides in the N-terminal region.</text>
</comment>
<comment type="similarity">
    <text evidence="1">Belongs to the PurH family.</text>
</comment>
<keyword id="KW-0007">Acetylation</keyword>
<keyword id="KW-0378">Hydrolase</keyword>
<keyword id="KW-0511">Multifunctional enzyme</keyword>
<keyword id="KW-0658">Purine biosynthesis</keyword>
<keyword id="KW-0808">Transferase</keyword>
<proteinExistence type="inferred from homology"/>
<protein>
    <recommendedName>
        <fullName evidence="1">Bifunctional purine biosynthesis protein PurH</fullName>
    </recommendedName>
    <domain>
        <recommendedName>
            <fullName evidence="1">Phosphoribosylaminoimidazolecarboxamide formyltransferase</fullName>
            <ecNumber evidence="1">2.1.2.3</ecNumber>
        </recommendedName>
        <alternativeName>
            <fullName evidence="1">AICAR transformylase</fullName>
        </alternativeName>
    </domain>
    <domain>
        <recommendedName>
            <fullName evidence="1">IMP cyclohydrolase</fullName>
            <ecNumber evidence="1">3.5.4.10</ecNumber>
        </recommendedName>
        <alternativeName>
            <fullName evidence="1">ATIC</fullName>
        </alternativeName>
        <alternativeName>
            <fullName evidence="1">IMP synthase</fullName>
        </alternativeName>
        <alternativeName>
            <fullName evidence="1">Inosinicase</fullName>
        </alternativeName>
    </domain>
</protein>
<name>PUR9_ESCF3</name>
<reference key="1">
    <citation type="journal article" date="2009" name="PLoS Genet.">
        <title>Organised genome dynamics in the Escherichia coli species results in highly diverse adaptive paths.</title>
        <authorList>
            <person name="Touchon M."/>
            <person name="Hoede C."/>
            <person name="Tenaillon O."/>
            <person name="Barbe V."/>
            <person name="Baeriswyl S."/>
            <person name="Bidet P."/>
            <person name="Bingen E."/>
            <person name="Bonacorsi S."/>
            <person name="Bouchier C."/>
            <person name="Bouvet O."/>
            <person name="Calteau A."/>
            <person name="Chiapello H."/>
            <person name="Clermont O."/>
            <person name="Cruveiller S."/>
            <person name="Danchin A."/>
            <person name="Diard M."/>
            <person name="Dossat C."/>
            <person name="Karoui M.E."/>
            <person name="Frapy E."/>
            <person name="Garry L."/>
            <person name="Ghigo J.M."/>
            <person name="Gilles A.M."/>
            <person name="Johnson J."/>
            <person name="Le Bouguenec C."/>
            <person name="Lescat M."/>
            <person name="Mangenot S."/>
            <person name="Martinez-Jehanne V."/>
            <person name="Matic I."/>
            <person name="Nassif X."/>
            <person name="Oztas S."/>
            <person name="Petit M.A."/>
            <person name="Pichon C."/>
            <person name="Rouy Z."/>
            <person name="Ruf C.S."/>
            <person name="Schneider D."/>
            <person name="Tourret J."/>
            <person name="Vacherie B."/>
            <person name="Vallenet D."/>
            <person name="Medigue C."/>
            <person name="Rocha E.P.C."/>
            <person name="Denamur E."/>
        </authorList>
    </citation>
    <scope>NUCLEOTIDE SEQUENCE [LARGE SCALE GENOMIC DNA]</scope>
    <source>
        <strain>ATCC 35469 / DSM 13698 / BCRC 15582 / CCUG 18766 / IAM 14443 / JCM 21226 / LMG 7866 / NBRC 102419 / NCTC 12128 / CDC 0568-73</strain>
    </source>
</reference>
<accession>B7LUJ6</accession>
<dbReference type="EC" id="2.1.2.3" evidence="1"/>
<dbReference type="EC" id="3.5.4.10" evidence="1"/>
<dbReference type="EMBL" id="CU928158">
    <property type="protein sequence ID" value="CAQ91199.1"/>
    <property type="molecule type" value="Genomic_DNA"/>
</dbReference>
<dbReference type="RefSeq" id="WP_001187552.1">
    <property type="nucleotide sequence ID" value="NC_011740.1"/>
</dbReference>
<dbReference type="SMR" id="B7LUJ6"/>
<dbReference type="GeneID" id="75059352"/>
<dbReference type="KEGG" id="efe:EFER_3748"/>
<dbReference type="HOGENOM" id="CLU_016316_5_2_6"/>
<dbReference type="OrthoDB" id="9802065at2"/>
<dbReference type="UniPathway" id="UPA00074">
    <property type="reaction ID" value="UER00133"/>
</dbReference>
<dbReference type="UniPathway" id="UPA00074">
    <property type="reaction ID" value="UER00135"/>
</dbReference>
<dbReference type="Proteomes" id="UP000000745">
    <property type="component" value="Chromosome"/>
</dbReference>
<dbReference type="GO" id="GO:0005829">
    <property type="term" value="C:cytosol"/>
    <property type="evidence" value="ECO:0007669"/>
    <property type="project" value="TreeGrafter"/>
</dbReference>
<dbReference type="GO" id="GO:0003937">
    <property type="term" value="F:IMP cyclohydrolase activity"/>
    <property type="evidence" value="ECO:0007669"/>
    <property type="project" value="UniProtKB-UniRule"/>
</dbReference>
<dbReference type="GO" id="GO:0004643">
    <property type="term" value="F:phosphoribosylaminoimidazolecarboxamide formyltransferase activity"/>
    <property type="evidence" value="ECO:0007669"/>
    <property type="project" value="UniProtKB-UniRule"/>
</dbReference>
<dbReference type="GO" id="GO:0006189">
    <property type="term" value="P:'de novo' IMP biosynthetic process"/>
    <property type="evidence" value="ECO:0007669"/>
    <property type="project" value="UniProtKB-UniRule"/>
</dbReference>
<dbReference type="CDD" id="cd01421">
    <property type="entry name" value="IMPCH"/>
    <property type="match status" value="1"/>
</dbReference>
<dbReference type="FunFam" id="3.40.140.20:FF:000001">
    <property type="entry name" value="Bifunctional purine biosynthesis protein PurH"/>
    <property type="match status" value="1"/>
</dbReference>
<dbReference type="FunFam" id="3.40.140.20:FF:000002">
    <property type="entry name" value="Bifunctional purine biosynthesis protein PurH"/>
    <property type="match status" value="1"/>
</dbReference>
<dbReference type="FunFam" id="3.40.50.1380:FF:000001">
    <property type="entry name" value="Bifunctional purine biosynthesis protein PurH"/>
    <property type="match status" value="1"/>
</dbReference>
<dbReference type="Gene3D" id="3.40.140.20">
    <property type="match status" value="2"/>
</dbReference>
<dbReference type="Gene3D" id="3.40.50.1380">
    <property type="entry name" value="Methylglyoxal synthase-like domain"/>
    <property type="match status" value="1"/>
</dbReference>
<dbReference type="HAMAP" id="MF_00139">
    <property type="entry name" value="PurH"/>
    <property type="match status" value="1"/>
</dbReference>
<dbReference type="InterPro" id="IPR024051">
    <property type="entry name" value="AICAR_Tfase_dup_dom_sf"/>
</dbReference>
<dbReference type="InterPro" id="IPR016193">
    <property type="entry name" value="Cytidine_deaminase-like"/>
</dbReference>
<dbReference type="InterPro" id="IPR011607">
    <property type="entry name" value="MGS-like_dom"/>
</dbReference>
<dbReference type="InterPro" id="IPR036914">
    <property type="entry name" value="MGS-like_dom_sf"/>
</dbReference>
<dbReference type="InterPro" id="IPR002695">
    <property type="entry name" value="PurH-like"/>
</dbReference>
<dbReference type="NCBIfam" id="NF002049">
    <property type="entry name" value="PRK00881.1"/>
    <property type="match status" value="1"/>
</dbReference>
<dbReference type="NCBIfam" id="TIGR00355">
    <property type="entry name" value="purH"/>
    <property type="match status" value="1"/>
</dbReference>
<dbReference type="PANTHER" id="PTHR11692:SF0">
    <property type="entry name" value="BIFUNCTIONAL PURINE BIOSYNTHESIS PROTEIN ATIC"/>
    <property type="match status" value="1"/>
</dbReference>
<dbReference type="PANTHER" id="PTHR11692">
    <property type="entry name" value="BIFUNCTIONAL PURINE BIOSYNTHESIS PROTEIN PURH"/>
    <property type="match status" value="1"/>
</dbReference>
<dbReference type="Pfam" id="PF01808">
    <property type="entry name" value="AICARFT_IMPCHas"/>
    <property type="match status" value="1"/>
</dbReference>
<dbReference type="Pfam" id="PF02142">
    <property type="entry name" value="MGS"/>
    <property type="match status" value="1"/>
</dbReference>
<dbReference type="PIRSF" id="PIRSF000414">
    <property type="entry name" value="AICARFT_IMPCHas"/>
    <property type="match status" value="1"/>
</dbReference>
<dbReference type="SMART" id="SM00798">
    <property type="entry name" value="AICARFT_IMPCHas"/>
    <property type="match status" value="1"/>
</dbReference>
<dbReference type="SMART" id="SM00851">
    <property type="entry name" value="MGS"/>
    <property type="match status" value="1"/>
</dbReference>
<dbReference type="SUPFAM" id="SSF53927">
    <property type="entry name" value="Cytidine deaminase-like"/>
    <property type="match status" value="1"/>
</dbReference>
<dbReference type="SUPFAM" id="SSF52335">
    <property type="entry name" value="Methylglyoxal synthase-like"/>
    <property type="match status" value="1"/>
</dbReference>
<dbReference type="PROSITE" id="PS51855">
    <property type="entry name" value="MGS"/>
    <property type="match status" value="1"/>
</dbReference>
<feature type="chain" id="PRO_1000192976" description="Bifunctional purine biosynthesis protein PurH">
    <location>
        <begin position="1"/>
        <end position="529"/>
    </location>
</feature>
<feature type="domain" description="MGS-like" evidence="2">
    <location>
        <begin position="1"/>
        <end position="148"/>
    </location>
</feature>
<feature type="modified residue" description="N6-acetyllysine" evidence="1">
    <location>
        <position position="287"/>
    </location>
</feature>
<evidence type="ECO:0000255" key="1">
    <source>
        <dbReference type="HAMAP-Rule" id="MF_00139"/>
    </source>
</evidence>
<evidence type="ECO:0000255" key="2">
    <source>
        <dbReference type="PROSITE-ProRule" id="PRU01202"/>
    </source>
</evidence>
<organism>
    <name type="scientific">Escherichia fergusonii (strain ATCC 35469 / DSM 13698 / CCUG 18766 / IAM 14443 / JCM 21226 / LMG 7866 / NBRC 102419 / NCTC 12128 / CDC 0568-73)</name>
    <dbReference type="NCBI Taxonomy" id="585054"/>
    <lineage>
        <taxon>Bacteria</taxon>
        <taxon>Pseudomonadati</taxon>
        <taxon>Pseudomonadota</taxon>
        <taxon>Gammaproteobacteria</taxon>
        <taxon>Enterobacterales</taxon>
        <taxon>Enterobacteriaceae</taxon>
        <taxon>Escherichia</taxon>
    </lineage>
</organism>